<sequence>MILTVTLNPAIDVSYPLDELKCDTVNRVVDVTKTPGDKGLNVCRVLNDFGETVKATGCIGGESGDFIINHLPDSILSRFYKISGDTRTCIAILHEGNQTEILEKGPLLSVEEIDGFTHHFKYLLNDVDVVTLSGSLPAGMPDDYYQKLIGIANLNGKKTVLDCSGNALEAVLKGDSKPTVIKPNLEELSQLLGKEMTKDFEALKEVLQDELFEGIEWIIVSLGADGVFAKHNDTFYNVDIPKIEIVSAVGSGDSTVAGIASGLANDEDDRALLTKANVLGMLNAQEKTTGHVNMANYDKLYQSIKVKEV</sequence>
<accession>Q1J4Q3</accession>
<dbReference type="EC" id="2.7.1.144" evidence="1"/>
<dbReference type="EMBL" id="CP000262">
    <property type="protein sequence ID" value="ABF38683.1"/>
    <property type="molecule type" value="Genomic_DNA"/>
</dbReference>
<dbReference type="SMR" id="Q1J4Q3"/>
<dbReference type="KEGG" id="spi:MGAS10750_Spy1733"/>
<dbReference type="HOGENOM" id="CLU_050013_5_0_9"/>
<dbReference type="UniPathway" id="UPA00704">
    <property type="reaction ID" value="UER00715"/>
</dbReference>
<dbReference type="Proteomes" id="UP000002434">
    <property type="component" value="Chromosome"/>
</dbReference>
<dbReference type="GO" id="GO:0005829">
    <property type="term" value="C:cytosol"/>
    <property type="evidence" value="ECO:0007669"/>
    <property type="project" value="TreeGrafter"/>
</dbReference>
<dbReference type="GO" id="GO:0005524">
    <property type="term" value="F:ATP binding"/>
    <property type="evidence" value="ECO:0007669"/>
    <property type="project" value="UniProtKB-KW"/>
</dbReference>
<dbReference type="GO" id="GO:0008443">
    <property type="term" value="F:phosphofructokinase activity"/>
    <property type="evidence" value="ECO:0007669"/>
    <property type="project" value="TreeGrafter"/>
</dbReference>
<dbReference type="GO" id="GO:0009024">
    <property type="term" value="F:tagatose-6-phosphate kinase activity"/>
    <property type="evidence" value="ECO:0007669"/>
    <property type="project" value="UniProtKB-UniRule"/>
</dbReference>
<dbReference type="GO" id="GO:2001059">
    <property type="term" value="P:D-tagatose 6-phosphate catabolic process"/>
    <property type="evidence" value="ECO:0007669"/>
    <property type="project" value="UniProtKB-UniRule"/>
</dbReference>
<dbReference type="GO" id="GO:0019512">
    <property type="term" value="P:lactose catabolic process via tagatose-6-phosphate"/>
    <property type="evidence" value="ECO:0007669"/>
    <property type="project" value="InterPro"/>
</dbReference>
<dbReference type="CDD" id="cd01164">
    <property type="entry name" value="FruK_PfkB_like"/>
    <property type="match status" value="1"/>
</dbReference>
<dbReference type="FunFam" id="3.40.1190.20:FF:000001">
    <property type="entry name" value="Phosphofructokinase"/>
    <property type="match status" value="1"/>
</dbReference>
<dbReference type="Gene3D" id="3.40.1190.20">
    <property type="match status" value="1"/>
</dbReference>
<dbReference type="HAMAP" id="MF_01557">
    <property type="entry name" value="LacC"/>
    <property type="match status" value="1"/>
</dbReference>
<dbReference type="InterPro" id="IPR005926">
    <property type="entry name" value="LacC"/>
</dbReference>
<dbReference type="InterPro" id="IPR011611">
    <property type="entry name" value="PfkB_dom"/>
</dbReference>
<dbReference type="InterPro" id="IPR029056">
    <property type="entry name" value="Ribokinase-like"/>
</dbReference>
<dbReference type="InterPro" id="IPR017583">
    <property type="entry name" value="Tagatose/fructose_Pkinase"/>
</dbReference>
<dbReference type="NCBIfam" id="TIGR03168">
    <property type="entry name" value="1-PFK"/>
    <property type="match status" value="1"/>
</dbReference>
<dbReference type="NCBIfam" id="TIGR01231">
    <property type="entry name" value="lacC"/>
    <property type="match status" value="1"/>
</dbReference>
<dbReference type="NCBIfam" id="NF010033">
    <property type="entry name" value="PRK13508.1"/>
    <property type="match status" value="1"/>
</dbReference>
<dbReference type="PANTHER" id="PTHR46566:SF5">
    <property type="entry name" value="1-PHOSPHOFRUCTOKINASE"/>
    <property type="match status" value="1"/>
</dbReference>
<dbReference type="PANTHER" id="PTHR46566">
    <property type="entry name" value="1-PHOSPHOFRUCTOKINASE-RELATED"/>
    <property type="match status" value="1"/>
</dbReference>
<dbReference type="Pfam" id="PF00294">
    <property type="entry name" value="PfkB"/>
    <property type="match status" value="1"/>
</dbReference>
<dbReference type="PIRSF" id="PIRSF000535">
    <property type="entry name" value="1PFK/6PFK/LacC"/>
    <property type="match status" value="1"/>
</dbReference>
<dbReference type="SUPFAM" id="SSF53613">
    <property type="entry name" value="Ribokinase-like"/>
    <property type="match status" value="1"/>
</dbReference>
<keyword id="KW-0067">ATP-binding</keyword>
<keyword id="KW-0418">Kinase</keyword>
<keyword id="KW-0423">Lactose metabolism</keyword>
<keyword id="KW-0547">Nucleotide-binding</keyword>
<keyword id="KW-0808">Transferase</keyword>
<reference key="1">
    <citation type="journal article" date="2006" name="Proc. Natl. Acad. Sci. U.S.A.">
        <title>Molecular genetic anatomy of inter- and intraserotype variation in the human bacterial pathogen group A Streptococcus.</title>
        <authorList>
            <person name="Beres S.B."/>
            <person name="Richter E.W."/>
            <person name="Nagiec M.J."/>
            <person name="Sumby P."/>
            <person name="Porcella S.F."/>
            <person name="DeLeo F.R."/>
            <person name="Musser J.M."/>
        </authorList>
    </citation>
    <scope>NUCLEOTIDE SEQUENCE [LARGE SCALE GENOMIC DNA]</scope>
    <source>
        <strain>MGAS10750</strain>
    </source>
</reference>
<organism>
    <name type="scientific">Streptococcus pyogenes serotype M4 (strain MGAS10750)</name>
    <dbReference type="NCBI Taxonomy" id="370554"/>
    <lineage>
        <taxon>Bacteria</taxon>
        <taxon>Bacillati</taxon>
        <taxon>Bacillota</taxon>
        <taxon>Bacilli</taxon>
        <taxon>Lactobacillales</taxon>
        <taxon>Streptococcaceae</taxon>
        <taxon>Streptococcus</taxon>
    </lineage>
</organism>
<proteinExistence type="inferred from homology"/>
<gene>
    <name evidence="1" type="primary">lacC</name>
    <name type="ordered locus">MGAS10750_Spy1733</name>
</gene>
<evidence type="ECO:0000255" key="1">
    <source>
        <dbReference type="HAMAP-Rule" id="MF_01557"/>
    </source>
</evidence>
<feature type="chain" id="PRO_1000068942" description="Tagatose-6-phosphate kinase">
    <location>
        <begin position="1"/>
        <end position="309"/>
    </location>
</feature>
<name>LACC_STRPF</name>
<comment type="catalytic activity">
    <reaction evidence="1">
        <text>D-tagatofuranose 6-phosphate + ATP = D-tagatofuranose 1,6-bisphosphate + ADP + H(+)</text>
        <dbReference type="Rhea" id="RHEA:12420"/>
        <dbReference type="ChEBI" id="CHEBI:15378"/>
        <dbReference type="ChEBI" id="CHEBI:30616"/>
        <dbReference type="ChEBI" id="CHEBI:58694"/>
        <dbReference type="ChEBI" id="CHEBI:58695"/>
        <dbReference type="ChEBI" id="CHEBI:456216"/>
        <dbReference type="EC" id="2.7.1.144"/>
    </reaction>
</comment>
<comment type="pathway">
    <text evidence="1">Carbohydrate metabolism; D-tagatose 6-phosphate degradation; D-glyceraldehyde 3-phosphate and glycerone phosphate from D-tagatose 6-phosphate: step 1/2.</text>
</comment>
<comment type="similarity">
    <text evidence="1">Belongs to the carbohydrate kinase PfkB family. LacC subfamily.</text>
</comment>
<protein>
    <recommendedName>
        <fullName evidence="1">Tagatose-6-phosphate kinase</fullName>
        <ecNumber evidence="1">2.7.1.144</ecNumber>
    </recommendedName>
    <alternativeName>
        <fullName evidence="1">Phosphotagatokinase</fullName>
    </alternativeName>
</protein>